<organism>
    <name type="scientific">Prochlorococcus marinus (strain SARG / CCMP1375 / SS120)</name>
    <dbReference type="NCBI Taxonomy" id="167539"/>
    <lineage>
        <taxon>Bacteria</taxon>
        <taxon>Bacillati</taxon>
        <taxon>Cyanobacteriota</taxon>
        <taxon>Cyanophyceae</taxon>
        <taxon>Synechococcales</taxon>
        <taxon>Prochlorococcaceae</taxon>
        <taxon>Prochlorococcus</taxon>
    </lineage>
</organism>
<sequence>MPLLLSGRKFRHDLEASGCLAINVPLEGGAETRLLRRLKAAGYKTQITSVRGLGDPEAFLLKLHGIRPPHLGHQNVGRNGALGEVQQVIPQVNELLAGEKSVVLWLLEGQVLSRSEILSLCDLCDKEPRLKIVIEMGGARALRWQSMRSFIQ</sequence>
<reference key="1">
    <citation type="journal article" date="2003" name="Proc. Natl. Acad. Sci. U.S.A.">
        <title>Genome sequence of the cyanobacterium Prochlorococcus marinus SS120, a nearly minimal oxyphototrophic genome.</title>
        <authorList>
            <person name="Dufresne A."/>
            <person name="Salanoubat M."/>
            <person name="Partensky F."/>
            <person name="Artiguenave F."/>
            <person name="Axmann I.M."/>
            <person name="Barbe V."/>
            <person name="Duprat S."/>
            <person name="Galperin M.Y."/>
            <person name="Koonin E.V."/>
            <person name="Le Gall F."/>
            <person name="Makarova K.S."/>
            <person name="Ostrowski M."/>
            <person name="Oztas S."/>
            <person name="Robert C."/>
            <person name="Rogozin I.B."/>
            <person name="Scanlan D.J."/>
            <person name="Tandeau de Marsac N."/>
            <person name="Weissenbach J."/>
            <person name="Wincker P."/>
            <person name="Wolf Y.I."/>
            <person name="Hess W.R."/>
        </authorList>
    </citation>
    <scope>NUCLEOTIDE SEQUENCE [LARGE SCALE GENOMIC DNA]</scope>
    <source>
        <strain>SARG / CCMP1375 / SS120</strain>
    </source>
</reference>
<feature type="chain" id="PRO_0000352219" description="NAD(P)H-quinone oxidoreductase subunit N">
    <location>
        <begin position="1"/>
        <end position="152"/>
    </location>
</feature>
<evidence type="ECO:0000255" key="1">
    <source>
        <dbReference type="HAMAP-Rule" id="MF_01353"/>
    </source>
</evidence>
<proteinExistence type="inferred from homology"/>
<dbReference type="EC" id="7.1.1.-" evidence="1"/>
<dbReference type="EMBL" id="AE017126">
    <property type="protein sequence ID" value="AAQ00757.1"/>
    <property type="molecule type" value="Genomic_DNA"/>
</dbReference>
<dbReference type="RefSeq" id="NP_876104.1">
    <property type="nucleotide sequence ID" value="NC_005042.1"/>
</dbReference>
<dbReference type="RefSeq" id="WP_011125862.1">
    <property type="nucleotide sequence ID" value="NC_005042.1"/>
</dbReference>
<dbReference type="SMR" id="Q7V9W1"/>
<dbReference type="STRING" id="167539.Pro_1713"/>
<dbReference type="EnsemblBacteria" id="AAQ00757">
    <property type="protein sequence ID" value="AAQ00757"/>
    <property type="gene ID" value="Pro_1713"/>
</dbReference>
<dbReference type="KEGG" id="pma:Pro_1713"/>
<dbReference type="PATRIC" id="fig|167539.5.peg.1808"/>
<dbReference type="eggNOG" id="ENOG5033TWM">
    <property type="taxonomic scope" value="Bacteria"/>
</dbReference>
<dbReference type="HOGENOM" id="CLU_087432_0_0_3"/>
<dbReference type="OrthoDB" id="510798at2"/>
<dbReference type="Proteomes" id="UP000001420">
    <property type="component" value="Chromosome"/>
</dbReference>
<dbReference type="GO" id="GO:0031676">
    <property type="term" value="C:plasma membrane-derived thylakoid membrane"/>
    <property type="evidence" value="ECO:0007669"/>
    <property type="project" value="UniProtKB-SubCell"/>
</dbReference>
<dbReference type="GO" id="GO:0016655">
    <property type="term" value="F:oxidoreductase activity, acting on NAD(P)H, quinone or similar compound as acceptor"/>
    <property type="evidence" value="ECO:0007669"/>
    <property type="project" value="UniProtKB-UniRule"/>
</dbReference>
<dbReference type="GO" id="GO:0048038">
    <property type="term" value="F:quinone binding"/>
    <property type="evidence" value="ECO:0007669"/>
    <property type="project" value="UniProtKB-KW"/>
</dbReference>
<dbReference type="HAMAP" id="MF_01353">
    <property type="entry name" value="NDH1_NDH1N"/>
    <property type="match status" value="1"/>
</dbReference>
<dbReference type="InterPro" id="IPR020874">
    <property type="entry name" value="NAD(P)H-quinone_OxRdtase_su_N"/>
</dbReference>
<dbReference type="PANTHER" id="PTHR35515">
    <property type="entry name" value="NAD(P)H-QUINONE OXIDOREDUCTASE SUBUNIT N, CHLOROPLASTIC"/>
    <property type="match status" value="1"/>
</dbReference>
<dbReference type="PANTHER" id="PTHR35515:SF1">
    <property type="entry name" value="NAD(P)H-QUINONE OXIDOREDUCTASE SUBUNIT N, CHLOROPLASTIC"/>
    <property type="match status" value="1"/>
</dbReference>
<dbReference type="Pfam" id="PF11909">
    <property type="entry name" value="NdhN"/>
    <property type="match status" value="1"/>
</dbReference>
<gene>
    <name evidence="1" type="primary">ndhN</name>
    <name type="ordered locus">Pro_1713</name>
</gene>
<name>NDHN_PROMA</name>
<accession>Q7V9W1</accession>
<protein>
    <recommendedName>
        <fullName evidence="1">NAD(P)H-quinone oxidoreductase subunit N</fullName>
        <ecNumber evidence="1">7.1.1.-</ecNumber>
    </recommendedName>
    <alternativeName>
        <fullName evidence="1">NAD(P)H dehydrogenase I subunit N</fullName>
        <shortName evidence="1">NDH-1 subunit N</shortName>
        <shortName evidence="1">NDH-N</shortName>
    </alternativeName>
</protein>
<comment type="function">
    <text evidence="1">NDH-1 shuttles electrons from an unknown electron donor, via FMN and iron-sulfur (Fe-S) centers, to quinones in the respiratory and/or the photosynthetic chain. The immediate electron acceptor for the enzyme in this species is believed to be plastoquinone. Couples the redox reaction to proton translocation, and thus conserves the redox energy in a proton gradient. Cyanobacterial NDH-1 also plays a role in inorganic carbon-concentration.</text>
</comment>
<comment type="catalytic activity">
    <reaction evidence="1">
        <text>a plastoquinone + NADH + (n+1) H(+)(in) = a plastoquinol + NAD(+) + n H(+)(out)</text>
        <dbReference type="Rhea" id="RHEA:42608"/>
        <dbReference type="Rhea" id="RHEA-COMP:9561"/>
        <dbReference type="Rhea" id="RHEA-COMP:9562"/>
        <dbReference type="ChEBI" id="CHEBI:15378"/>
        <dbReference type="ChEBI" id="CHEBI:17757"/>
        <dbReference type="ChEBI" id="CHEBI:57540"/>
        <dbReference type="ChEBI" id="CHEBI:57945"/>
        <dbReference type="ChEBI" id="CHEBI:62192"/>
    </reaction>
</comment>
<comment type="catalytic activity">
    <reaction evidence="1">
        <text>a plastoquinone + NADPH + (n+1) H(+)(in) = a plastoquinol + NADP(+) + n H(+)(out)</text>
        <dbReference type="Rhea" id="RHEA:42612"/>
        <dbReference type="Rhea" id="RHEA-COMP:9561"/>
        <dbReference type="Rhea" id="RHEA-COMP:9562"/>
        <dbReference type="ChEBI" id="CHEBI:15378"/>
        <dbReference type="ChEBI" id="CHEBI:17757"/>
        <dbReference type="ChEBI" id="CHEBI:57783"/>
        <dbReference type="ChEBI" id="CHEBI:58349"/>
        <dbReference type="ChEBI" id="CHEBI:62192"/>
    </reaction>
</comment>
<comment type="subunit">
    <text evidence="1">NDH-1 can be composed of about 15 different subunits; different subcomplexes with different compositions have been identified which probably have different functions.</text>
</comment>
<comment type="subcellular location">
    <subcellularLocation>
        <location evidence="1">Cellular thylakoid membrane</location>
        <topology evidence="1">Peripheral membrane protein</topology>
        <orientation evidence="1">Cytoplasmic side</orientation>
    </subcellularLocation>
</comment>
<comment type="similarity">
    <text evidence="1">Belongs to the complex I NdhN subunit family.</text>
</comment>
<keyword id="KW-0472">Membrane</keyword>
<keyword id="KW-0520">NAD</keyword>
<keyword id="KW-0521">NADP</keyword>
<keyword id="KW-0618">Plastoquinone</keyword>
<keyword id="KW-0874">Quinone</keyword>
<keyword id="KW-1185">Reference proteome</keyword>
<keyword id="KW-0793">Thylakoid</keyword>
<keyword id="KW-1278">Translocase</keyword>
<keyword id="KW-0813">Transport</keyword>